<proteinExistence type="inferred from homology"/>
<protein>
    <recommendedName>
        <fullName>RNA-directed RNA polymerase L</fullName>
        <shortName>Protein L</shortName>
    </recommendedName>
    <alternativeName>
        <fullName>Large structural protein</fullName>
    </alternativeName>
    <alternativeName>
        <fullName>Replicase</fullName>
    </alternativeName>
    <alternativeName>
        <fullName>Transcriptase</fullName>
    </alternativeName>
    <domain>
        <recommendedName>
            <fullName>RNA-directed RNA polymerase</fullName>
            <ecNumber evidence="2">2.7.7.48</ecNumber>
        </recommendedName>
    </domain>
    <domain>
        <recommendedName>
            <fullName evidence="1">GTP phosphohydrolase</fullName>
            <ecNumber evidence="1">3.6.1.-</ecNumber>
        </recommendedName>
    </domain>
    <domain>
        <recommendedName>
            <fullName evidence="5">GDP polyribonucleotidyltransferase</fullName>
            <ecNumber evidence="1">2.7.7.88</ecNumber>
        </recommendedName>
        <alternativeName>
            <fullName evidence="5">PRNTase</fullName>
        </alternativeName>
    </domain>
    <domain>
        <recommendedName>
            <fullName evidence="5">mRNA cap methyltransferase</fullName>
            <ecNumber evidence="1">2.1.1.375</ecNumber>
        </recommendedName>
        <alternativeName>
            <fullName evidence="1">mRNA (guanine-N(7)-)-methyltransferase</fullName>
            <shortName evidence="1">G-N7-MTase</shortName>
        </alternativeName>
        <alternativeName>
            <fullName evidence="1">mRNA (nucleoside-2'-O-)-methyltransferase</fullName>
            <shortName evidence="1">N1-2'-O-MTase</shortName>
        </alternativeName>
    </domain>
</protein>
<feature type="chain" id="PRO_0000297837" description="RNA-directed RNA polymerase L">
    <location>
        <begin position="1"/>
        <end position="2068"/>
    </location>
</feature>
<feature type="domain" description="RdRp catalytic" evidence="3">
    <location>
        <begin position="564"/>
        <end position="750"/>
    </location>
</feature>
<feature type="domain" description="Mononegavirus-type SAM-dependent 2'-O-MTase" evidence="4">
    <location>
        <begin position="1657"/>
        <end position="1847"/>
    </location>
</feature>
<accession>Q4W382</accession>
<organismHost>
    <name type="scientific">Embergeria</name>
    <dbReference type="NCBI Taxonomy" id="43191"/>
</organismHost>
<organismHost>
    <name type="scientific">Lactuca sativa</name>
    <name type="common">Garden lettuce</name>
    <dbReference type="NCBI Taxonomy" id="4236"/>
</organismHost>
<organismHost>
    <name type="scientific">Reichardia tingitana</name>
    <dbReference type="NCBI Taxonomy" id="43208"/>
</organismHost>
<organismHost>
    <name type="scientific">Sonchus hydrophilus</name>
    <dbReference type="NCBI Taxonomy" id="255580"/>
</organismHost>
<organismHost>
    <name type="scientific">Sonchus oleraceus</name>
    <name type="common">Common sowthistle</name>
    <dbReference type="NCBI Taxonomy" id="50207"/>
</organismHost>
<sequence length="2068" mass="236583">MDLWNEETTPKKNAYDSLPDYHLQNPLYAITDQLSMLKRGKRLNYRLTSSYKLMKSQSTDIKEGDPILLKEWARNWFSETELYVVDQTLSDCENRLSLDETDDLHFDTHLLRESVRMWRCEFPHDDWVRMRGMQNLLIVMNAISSRRPPPPRHTCIIPGLSKITVEGGVVLVTSSLLGFQPEGDKETTVFAADWVRAVSDVYTERFLVLSGAILGRCLSDEHYPQVLDLEFIINWGDTVLRRKGNKGFKLLKAYEALVLGVVQGKSESDFIDPDRFLRNTLNDIIDDDKDLGAYAVLLIQRLQQIDSAHHLIQLFGLHRIWGHPLVDPAKGMEKMIIIGQKDIVRETSRPEVMGVHFKKLMAQGYREKHGVYPNVKGNGELETLIKNNHDWKEVGSLDNDNHWRLLRFDKTFSIPESFNLSMIVADKSVSPTLSELKENILRKKTVMNQELRRGVLRWINHDSIDPREFLEQVNDKKFPDDHKIIGLRSKEREMNPTPRMFALMSHLMRVYVVITESMLSEHILPYFPQITMTDSQLDLTKKTYSTVKNQAAKIRRSGALYDTKTVCMSLDFEKWNGHMRKESTFHVFEALGDLFGMENLYNETYDIFKDSYFYLADGSYVPSMDAQGNFTPEPPYSFTGHKGGQEGLRQKGWTIFTVVCLDWICRKHNCTYKIMGMGDNQVLQLTMYTYRVDASGKATERGREDMRRVLFGLFDDLLDVFSDLGLPLKPLETWISEDLFVYGKYPVLKGVPLSMDLKKIMRIFPFSNQETMTIENALNTIAGNAQAATQAAPFLGVSYLVGIFMISLCSHDMLVYHPLIAKGLREVLRENRTWGLKFKGAHQVKTDIKGEMVDETNLRRLMMNVPRILGGYVSFNLYGLMMRGFPDPVSLAYSQLFSWGVPTGGSDQRDYMLRWLKPIFMPERSMRLLVEDVSSVNLLAPVTPTAGLRRVVEQYLTDGRVIKNAEFRDLMMSRDNELEDVISEHLCSGEHLHIRLIHDIMESTIFGYVKSITSKVTKSSTIVSLAIGKAKGDPLTRLMSDEENYFRFFMWRSVINPHYDIPACPTDLAKQVRRIGWGKELIGVTVAYPWSFLKKTDCYESGCLCTCDDGFISLFLPDSPVTPQEWDRSIGKNPPYLGSMTKEKVVISTGSKVYSGEPLVRRPINLMRVIGWFVPEESETAKIIMSCVSAVSDVNPLIFKGMTEGTSGSEIHRFRDTSLKHGALCSSNYLYSTRYHVSTDTFTRYAKGAQNYDMLFQANLCAIVETTHQYVLKTNQSKEPQRKTHHYKQTCYSCINPLDESFYDVKSSKLSQLIPSKKTNKYLYVPEAKISMTLEHVPAKSWEFGTLSSDGFDQLSVNLRLQWLTDAVADNVVIDILNPAGEESYTTTSLMDIKEHNRLFYLTIRPRDFYDQLCNRILILAEWRCMSLSDWKTPTTEAISRAAEAIIGDTPISRWYGVTGFFSWPSSMERYYVYPEIQEPDSIPVTALSACRSVRNSLLGLLGSSRKFRGRNTRIFSEDAKASKLSLKLMVYDWVKKKKKCRACHREIGIMSAHQLSSTLPNSIICPKGHYVTQGLKDLDIMRSRVTLDSLRKCCSSDEIPTEPMEKKITEWAPLTSTTCRTLFDSSSMRSELIPYSPTGIESSINVQPIPKSDLYKLISLPTNAMYKYMEVISRNIEGIMNCKTAFVTGNGLGGTSKVLSNMWPGRIITSTLLDTGDAIPQVYPNCDKGSSSYARGTVISDLMVTRVNDVNHLLWGEDWKPVFQSYETDLCISDIEINGELNGESRQTMIATVTMAHDWKMVIMKDYIYNMREMENRLSILLPVFKSLELITCNSRQRVMPEVWWIMKARRSSGKLLGYHRSVIRQIWDGVKEGINTADWAMESVFSEINRTIASTADMIAMTIRLKAFFSLPIVGSVLPYKGSYTRLLGYLQRGKKPEDISLITSDDGKRLYLSDYEKVRSVLFGLAVGMCSSATERDRMLDESEYWAIDWIPSGPHIWLPYLFKGVERSTLIHVYDYIPMLTLIMKRERLLFKSSSDIIEFKYTNNRDSCCFPITKTAKIKFNIK</sequence>
<organism>
    <name type="scientific">Lettuce necrotic yellows virus (isolate 318)</name>
    <name type="common">LNYV</name>
    <dbReference type="NCBI Taxonomy" id="928304"/>
    <lineage>
        <taxon>Viruses</taxon>
        <taxon>Riboviria</taxon>
        <taxon>Orthornavirae</taxon>
        <taxon>Negarnaviricota</taxon>
        <taxon>Haploviricotina</taxon>
        <taxon>Monjiviricetes</taxon>
        <taxon>Mononegavirales</taxon>
        <taxon>Rhabdoviridae</taxon>
        <taxon>Betarhabdovirinae</taxon>
        <taxon>Cytorhabdovirus</taxon>
        <taxon>Cytorhabdovirus lactucanecante</taxon>
    </lineage>
</organism>
<reference key="1">
    <citation type="journal article" date="2006" name="Virus Res.">
        <title>Completion of the genome sequence of Lettuce necrotic yellows virus, type species of the genus Cytorhabdovirus.</title>
        <authorList>
            <person name="Dietzgen R.G."/>
            <person name="Callaghan B."/>
            <person name="Wetzel T."/>
            <person name="Dale J.L."/>
        </authorList>
    </citation>
    <scope>NUCLEOTIDE SEQUENCE [GENOMIC RNA]</scope>
</reference>
<dbReference type="EC" id="2.7.7.48" evidence="2"/>
<dbReference type="EC" id="3.6.1.-" evidence="1"/>
<dbReference type="EC" id="2.7.7.88" evidence="1"/>
<dbReference type="EC" id="2.1.1.375" evidence="1"/>
<dbReference type="EMBL" id="AJ746199">
    <property type="protein sequence ID" value="CAG34091.1"/>
    <property type="molecule type" value="Genomic_RNA"/>
</dbReference>
<dbReference type="EMBL" id="AJ867584">
    <property type="protein sequence ID" value="CAI30426.1"/>
    <property type="molecule type" value="Genomic_RNA"/>
</dbReference>
<dbReference type="RefSeq" id="YP_425092.1">
    <property type="nucleotide sequence ID" value="NC_007642.1"/>
</dbReference>
<dbReference type="SMR" id="Q4W382"/>
<dbReference type="GeneID" id="3844362"/>
<dbReference type="KEGG" id="vg:3844362"/>
<dbReference type="Proteomes" id="UP000008592">
    <property type="component" value="Segment"/>
</dbReference>
<dbReference type="GO" id="GO:0030430">
    <property type="term" value="C:host cell cytoplasm"/>
    <property type="evidence" value="ECO:0007669"/>
    <property type="project" value="UniProtKB-SubCell"/>
</dbReference>
<dbReference type="GO" id="GO:0044423">
    <property type="term" value="C:virion component"/>
    <property type="evidence" value="ECO:0007669"/>
    <property type="project" value="UniProtKB-KW"/>
</dbReference>
<dbReference type="GO" id="GO:0005524">
    <property type="term" value="F:ATP binding"/>
    <property type="evidence" value="ECO:0007669"/>
    <property type="project" value="UniProtKB-KW"/>
</dbReference>
<dbReference type="GO" id="GO:0003924">
    <property type="term" value="F:GTPase activity"/>
    <property type="evidence" value="ECO:0007669"/>
    <property type="project" value="RHEA"/>
</dbReference>
<dbReference type="GO" id="GO:0004482">
    <property type="term" value="F:mRNA 5'-cap (guanine-N7-)-methyltransferase activity"/>
    <property type="evidence" value="ECO:0007669"/>
    <property type="project" value="InterPro"/>
</dbReference>
<dbReference type="GO" id="GO:0003968">
    <property type="term" value="F:RNA-directed RNA polymerase activity"/>
    <property type="evidence" value="ECO:0007669"/>
    <property type="project" value="UniProtKB-KW"/>
</dbReference>
<dbReference type="GO" id="GO:0039689">
    <property type="term" value="P:negative stranded viral RNA replication"/>
    <property type="evidence" value="ECO:0000314"/>
    <property type="project" value="UniProtKB"/>
</dbReference>
<dbReference type="InterPro" id="IPR039736">
    <property type="entry name" value="L_poly_C"/>
</dbReference>
<dbReference type="InterPro" id="IPR026890">
    <property type="entry name" value="Mononeg_mRNAcap"/>
</dbReference>
<dbReference type="InterPro" id="IPR014023">
    <property type="entry name" value="Mononeg_RNA_pol_cat"/>
</dbReference>
<dbReference type="InterPro" id="IPR025786">
    <property type="entry name" value="Mononega_L_MeTrfase"/>
</dbReference>
<dbReference type="NCBIfam" id="TIGR04198">
    <property type="entry name" value="paramyx_RNAcap"/>
    <property type="match status" value="1"/>
</dbReference>
<dbReference type="Pfam" id="PF14318">
    <property type="entry name" value="Mononeg_mRNAcap"/>
    <property type="match status" value="1"/>
</dbReference>
<dbReference type="Pfam" id="PF00946">
    <property type="entry name" value="Mononeg_RNA_pol"/>
    <property type="match status" value="1"/>
</dbReference>
<dbReference type="PROSITE" id="PS50526">
    <property type="entry name" value="RDRP_SSRNA_NEG_NONSEG"/>
    <property type="match status" value="1"/>
</dbReference>
<dbReference type="PROSITE" id="PS51590">
    <property type="entry name" value="SAM_MT_MNV_L"/>
    <property type="match status" value="1"/>
</dbReference>
<name>L_LNYV3</name>
<evidence type="ECO:0000250" key="1">
    <source>
        <dbReference type="UniProtKB" id="P03523"/>
    </source>
</evidence>
<evidence type="ECO:0000250" key="2">
    <source>
        <dbReference type="UniProtKB" id="P28887"/>
    </source>
</evidence>
<evidence type="ECO:0000255" key="3">
    <source>
        <dbReference type="PROSITE-ProRule" id="PRU00539"/>
    </source>
</evidence>
<evidence type="ECO:0000255" key="4">
    <source>
        <dbReference type="PROSITE-ProRule" id="PRU00923"/>
    </source>
</evidence>
<evidence type="ECO:0000305" key="5"/>
<gene>
    <name type="primary">L</name>
</gene>
<keyword id="KW-0067">ATP-binding</keyword>
<keyword id="KW-1035">Host cytoplasm</keyword>
<keyword id="KW-0378">Hydrolase</keyword>
<keyword id="KW-0489">Methyltransferase</keyword>
<keyword id="KW-0506">mRNA capping</keyword>
<keyword id="KW-0507">mRNA processing</keyword>
<keyword id="KW-0511">Multifunctional enzyme</keyword>
<keyword id="KW-0547">Nucleotide-binding</keyword>
<keyword id="KW-0548">Nucleotidyltransferase</keyword>
<keyword id="KW-1185">Reference proteome</keyword>
<keyword id="KW-0696">RNA-directed RNA polymerase</keyword>
<keyword id="KW-0949">S-adenosyl-L-methionine</keyword>
<keyword id="KW-0808">Transferase</keyword>
<keyword id="KW-0693">Viral RNA replication</keyword>
<keyword id="KW-0946">Virion</keyword>
<comment type="function">
    <text evidence="1">RNA-directed RNA polymerase that catalyzes the transcription of viral mRNAs, their capping and polyadenylation. The template is composed of the viral RNA tightly encapsidated by the nucleoprotein (N). The viral polymerase binds to the genomic RNA at the 3' leader promoter, and transcribes subsequently all viral mRNAs with a decreasing efficiency. The first gene is the most transcribed, and the last the least transcribed. The viral phosphoprotein acts as a processivity factor. Capping is concomitant with initiation of mRNA transcription. Indeed, a GDP polyribonucleotidyl transferase (PRNTase) adds the cap structure when the nascent RNA chain length has reached few nucleotides. Ribose 2'-O methylation of viral mRNA cap precedes and facilitates subsequent guanine-N-7 methylation, both activities being carried by the viral polymerase. Polyadenylation of mRNAs occur by a stuttering mechanism at a slipery stop site present at the end viral genes. After finishing transcription of a mRNA, the polymerase can resume transcription of the downstream gene.</text>
</comment>
<comment type="function">
    <text evidence="1">RNA-directed RNA polymerase that catalyzes the replication of viral genomic RNA. The template is composed of the viral RNA tightly encapsidated by the nucleoprotein (N). The replicase mode is dependent on intracellular N protein concentration. In this mode, the polymerase replicates the whole viral genome without recognizing transcriptional signals, and the replicated genome is not caped or polyadenylated.</text>
</comment>
<comment type="catalytic activity">
    <reaction evidence="3">
        <text>RNA(n) + a ribonucleoside 5'-triphosphate = RNA(n+1) + diphosphate</text>
        <dbReference type="Rhea" id="RHEA:21248"/>
        <dbReference type="Rhea" id="RHEA-COMP:14527"/>
        <dbReference type="Rhea" id="RHEA-COMP:17342"/>
        <dbReference type="ChEBI" id="CHEBI:33019"/>
        <dbReference type="ChEBI" id="CHEBI:61557"/>
        <dbReference type="ChEBI" id="CHEBI:140395"/>
        <dbReference type="EC" id="2.7.7.48"/>
    </reaction>
</comment>
<comment type="catalytic activity">
    <reaction evidence="1">
        <text>a 5'-end (5'-triphosphoguanosine)-adenylyl-adenylyl-cytidylyl-adenosine in mRNA + 2 S-adenosyl-L-methionine = a 5'-end (N(7)-methyl 5'-triphosphoguanosine)-(2'-O-methyladenylyl)-adenylyl-cytidylyl-adenosine in mRNA + 2 S-adenosyl-L-homocysteine + H(+)</text>
        <dbReference type="Rhea" id="RHEA:65376"/>
        <dbReference type="Rhea" id="RHEA-COMP:16797"/>
        <dbReference type="Rhea" id="RHEA-COMP:16798"/>
        <dbReference type="ChEBI" id="CHEBI:15378"/>
        <dbReference type="ChEBI" id="CHEBI:57856"/>
        <dbReference type="ChEBI" id="CHEBI:59789"/>
        <dbReference type="ChEBI" id="CHEBI:156483"/>
        <dbReference type="ChEBI" id="CHEBI:156484"/>
        <dbReference type="EC" id="2.1.1.375"/>
    </reaction>
</comment>
<comment type="catalytic activity">
    <reaction evidence="1">
        <text>a 5'-end (5'-triphosphoguanosine)-adenylyl-adenylyl-cytidylyl-adenosine in mRNA + S-adenosyl-L-methionine = a 5'-end (5'-triphosphoguanosine)-(2'-O-methyladenylyl)-adenylyl-cytidylyl-adenosine in mRNA + S-adenosyl-L-homocysteine + H(+)</text>
        <dbReference type="Rhea" id="RHEA:65380"/>
        <dbReference type="Rhea" id="RHEA-COMP:16797"/>
        <dbReference type="Rhea" id="RHEA-COMP:16801"/>
        <dbReference type="ChEBI" id="CHEBI:15378"/>
        <dbReference type="ChEBI" id="CHEBI:57856"/>
        <dbReference type="ChEBI" id="CHEBI:59789"/>
        <dbReference type="ChEBI" id="CHEBI:156482"/>
        <dbReference type="ChEBI" id="CHEBI:156484"/>
    </reaction>
</comment>
<comment type="catalytic activity">
    <reaction evidence="2">
        <text>a 5'-end triphospho-adenylyl-adenylyl-cytidylyl-adenosine in mRNA + GDP + H(+) = a 5'-end (5'-triphosphoguanosine)-adenylyl-adenylyl-cytidylyl-adenosine in mRNA + diphosphate</text>
        <dbReference type="Rhea" id="RHEA:65436"/>
        <dbReference type="Rhea" id="RHEA-COMP:16797"/>
        <dbReference type="Rhea" id="RHEA-COMP:16799"/>
        <dbReference type="ChEBI" id="CHEBI:15378"/>
        <dbReference type="ChEBI" id="CHEBI:33019"/>
        <dbReference type="ChEBI" id="CHEBI:58189"/>
        <dbReference type="ChEBI" id="CHEBI:156484"/>
        <dbReference type="ChEBI" id="CHEBI:156503"/>
        <dbReference type="EC" id="2.7.7.88"/>
    </reaction>
</comment>
<comment type="catalytic activity">
    <reaction evidence="1">
        <text>a 5'-end (5'-triphosphoguanosine)-(2'-O-methyladenylyl)-adenylyl-cytidylyl-adenosine in mRNA + S-adenosyl-L-methionine = a 5'-end (N(7)-methyl 5'-triphosphoguanosine)-(2'-O-methyladenylyl)-adenylyl-cytidylyl-adenosine in mRNA + S-adenosyl-L-homocysteine</text>
        <dbReference type="Rhea" id="RHEA:65440"/>
        <dbReference type="Rhea" id="RHEA-COMP:16798"/>
        <dbReference type="Rhea" id="RHEA-COMP:16801"/>
        <dbReference type="ChEBI" id="CHEBI:57856"/>
        <dbReference type="ChEBI" id="CHEBI:59789"/>
        <dbReference type="ChEBI" id="CHEBI:156482"/>
        <dbReference type="ChEBI" id="CHEBI:156483"/>
    </reaction>
</comment>
<comment type="catalytic activity">
    <reaction evidence="2">
        <text>GTP + H2O = GDP + phosphate + H(+)</text>
        <dbReference type="Rhea" id="RHEA:19669"/>
        <dbReference type="ChEBI" id="CHEBI:15377"/>
        <dbReference type="ChEBI" id="CHEBI:15378"/>
        <dbReference type="ChEBI" id="CHEBI:37565"/>
        <dbReference type="ChEBI" id="CHEBI:43474"/>
        <dbReference type="ChEBI" id="CHEBI:58189"/>
    </reaction>
</comment>
<comment type="subunit">
    <text evidence="1">May form homodimer. Interacts with the P protein.</text>
</comment>
<comment type="subcellular location">
    <subcellularLocation>
        <location evidence="1">Virion</location>
    </subcellularLocation>
    <subcellularLocation>
        <location evidence="1">Host cytoplasm</location>
    </subcellularLocation>
    <text evidence="1">L and P are packaged asymmetrically towards the blunt end of the virus.</text>
</comment>
<comment type="similarity">
    <text evidence="5">Belongs to the rhabdoviridae protein L family.</text>
</comment>